<gene>
    <name evidence="1" type="primary">mutH</name>
    <name type="ordered locus">CKO_04202</name>
</gene>
<protein>
    <recommendedName>
        <fullName evidence="1">DNA mismatch repair protein MutH</fullName>
    </recommendedName>
    <alternativeName>
        <fullName evidence="1">Methyl-directed mismatch repair protein</fullName>
    </alternativeName>
</protein>
<evidence type="ECO:0000255" key="1">
    <source>
        <dbReference type="HAMAP-Rule" id="MF_00759"/>
    </source>
</evidence>
<accession>A8AP50</accession>
<keyword id="KW-0963">Cytoplasm</keyword>
<keyword id="KW-0227">DNA damage</keyword>
<keyword id="KW-0234">DNA repair</keyword>
<keyword id="KW-0255">Endonuclease</keyword>
<keyword id="KW-0378">Hydrolase</keyword>
<keyword id="KW-0540">Nuclease</keyword>
<keyword id="KW-1185">Reference proteome</keyword>
<feature type="chain" id="PRO_1000046693" description="DNA mismatch repair protein MutH">
    <location>
        <begin position="1"/>
        <end position="230"/>
    </location>
</feature>
<comment type="function">
    <text evidence="1">Sequence-specific endonuclease that cleaves unmethylated GATC sequences. It is involved in DNA mismatch repair.</text>
</comment>
<comment type="subcellular location">
    <subcellularLocation>
        <location evidence="1">Cytoplasm</location>
    </subcellularLocation>
</comment>
<comment type="similarity">
    <text evidence="1">Belongs to the MutH family.</text>
</comment>
<proteinExistence type="inferred from homology"/>
<sequence>MPGLRPLLSPPASEALLLAQAQQLSGYSLGELAALAGLVAPKDLKRDKGWIGVLLEIWLGASAGSKPEQDFAALGVELKTIPVDSLGHPLETTFVCVAPLTGNSGVTWETSHVRHKLKRVLWVPVEGDRSIPLADRRVGSPLLWSPNEEEDQQLRLDWEELMDMIVLGQVERITARHGEFLQLRPKAANAKALTEAIGAQGETILTLPRGFYLKKNFTRTLLARHFLLQG</sequence>
<dbReference type="EMBL" id="CP000822">
    <property type="protein sequence ID" value="ABV15263.1"/>
    <property type="molecule type" value="Genomic_DNA"/>
</dbReference>
<dbReference type="RefSeq" id="WP_012134948.1">
    <property type="nucleotide sequence ID" value="NC_009792.1"/>
</dbReference>
<dbReference type="SMR" id="A8AP50"/>
<dbReference type="STRING" id="290338.CKO_04202"/>
<dbReference type="GeneID" id="45137818"/>
<dbReference type="KEGG" id="cko:CKO_04202"/>
<dbReference type="HOGENOM" id="CLU_086669_0_0_6"/>
<dbReference type="OrthoDB" id="5634909at2"/>
<dbReference type="Proteomes" id="UP000008148">
    <property type="component" value="Chromosome"/>
</dbReference>
<dbReference type="GO" id="GO:0005737">
    <property type="term" value="C:cytoplasm"/>
    <property type="evidence" value="ECO:0007669"/>
    <property type="project" value="UniProtKB-SubCell"/>
</dbReference>
<dbReference type="GO" id="GO:0003677">
    <property type="term" value="F:DNA binding"/>
    <property type="evidence" value="ECO:0007669"/>
    <property type="project" value="InterPro"/>
</dbReference>
<dbReference type="GO" id="GO:0004519">
    <property type="term" value="F:endonuclease activity"/>
    <property type="evidence" value="ECO:0007669"/>
    <property type="project" value="UniProtKB-UniRule"/>
</dbReference>
<dbReference type="GO" id="GO:0006304">
    <property type="term" value="P:DNA modification"/>
    <property type="evidence" value="ECO:0007669"/>
    <property type="project" value="InterPro"/>
</dbReference>
<dbReference type="GO" id="GO:0006298">
    <property type="term" value="P:mismatch repair"/>
    <property type="evidence" value="ECO:0007669"/>
    <property type="project" value="UniProtKB-UniRule"/>
</dbReference>
<dbReference type="CDD" id="cd00583">
    <property type="entry name" value="MutH-like"/>
    <property type="match status" value="1"/>
</dbReference>
<dbReference type="FunFam" id="3.40.600.10:FF:000001">
    <property type="entry name" value="DNA mismatch repair protein MutH"/>
    <property type="match status" value="1"/>
</dbReference>
<dbReference type="Gene3D" id="3.40.600.10">
    <property type="entry name" value="DNA mismatch repair MutH/Restriction endonuclease, type II"/>
    <property type="match status" value="1"/>
</dbReference>
<dbReference type="HAMAP" id="MF_00759">
    <property type="entry name" value="MutH"/>
    <property type="match status" value="1"/>
</dbReference>
<dbReference type="InterPro" id="IPR004230">
    <property type="entry name" value="DNA_mismatch_repair_MutH"/>
</dbReference>
<dbReference type="InterPro" id="IPR011337">
    <property type="entry name" value="DNA_rep_MutH/RE_typeII_Sau3AI"/>
</dbReference>
<dbReference type="InterPro" id="IPR037057">
    <property type="entry name" value="DNA_rep_MutH/T2_RE_sf"/>
</dbReference>
<dbReference type="InterPro" id="IPR011335">
    <property type="entry name" value="Restrct_endonuc-II-like"/>
</dbReference>
<dbReference type="NCBIfam" id="TIGR02248">
    <property type="entry name" value="mutH_TIGR"/>
    <property type="match status" value="1"/>
</dbReference>
<dbReference type="NCBIfam" id="NF003458">
    <property type="entry name" value="PRK05070.1"/>
    <property type="match status" value="1"/>
</dbReference>
<dbReference type="Pfam" id="PF02976">
    <property type="entry name" value="MutH"/>
    <property type="match status" value="1"/>
</dbReference>
<dbReference type="SMART" id="SM00927">
    <property type="entry name" value="MutH"/>
    <property type="match status" value="1"/>
</dbReference>
<dbReference type="SUPFAM" id="SSF52980">
    <property type="entry name" value="Restriction endonuclease-like"/>
    <property type="match status" value="1"/>
</dbReference>
<organism>
    <name type="scientific">Citrobacter koseri (strain ATCC BAA-895 / CDC 4225-83 / SGSC4696)</name>
    <dbReference type="NCBI Taxonomy" id="290338"/>
    <lineage>
        <taxon>Bacteria</taxon>
        <taxon>Pseudomonadati</taxon>
        <taxon>Pseudomonadota</taxon>
        <taxon>Gammaproteobacteria</taxon>
        <taxon>Enterobacterales</taxon>
        <taxon>Enterobacteriaceae</taxon>
        <taxon>Citrobacter</taxon>
    </lineage>
</organism>
<reference key="1">
    <citation type="submission" date="2007-08" db="EMBL/GenBank/DDBJ databases">
        <authorList>
            <consortium name="The Citrobacter koseri Genome Sequencing Project"/>
            <person name="McClelland M."/>
            <person name="Sanderson E.K."/>
            <person name="Porwollik S."/>
            <person name="Spieth J."/>
            <person name="Clifton W.S."/>
            <person name="Latreille P."/>
            <person name="Courtney L."/>
            <person name="Wang C."/>
            <person name="Pepin K."/>
            <person name="Bhonagiri V."/>
            <person name="Nash W."/>
            <person name="Johnson M."/>
            <person name="Thiruvilangam P."/>
            <person name="Wilson R."/>
        </authorList>
    </citation>
    <scope>NUCLEOTIDE SEQUENCE [LARGE SCALE GENOMIC DNA]</scope>
    <source>
        <strain>ATCC BAA-895 / CDC 4225-83 / SGSC4696</strain>
    </source>
</reference>
<name>MUTH_CITK8</name>